<accession>Q9V730</accession>
<accession>O76796</accession>
<accession>Q5BI21</accession>
<gene>
    <name type="primary">ttv</name>
    <name type="synonym">DEXT1</name>
    <name type="ORF">CG10117</name>
</gene>
<organism>
    <name type="scientific">Drosophila melanogaster</name>
    <name type="common">Fruit fly</name>
    <dbReference type="NCBI Taxonomy" id="7227"/>
    <lineage>
        <taxon>Eukaryota</taxon>
        <taxon>Metazoa</taxon>
        <taxon>Ecdysozoa</taxon>
        <taxon>Arthropoda</taxon>
        <taxon>Hexapoda</taxon>
        <taxon>Insecta</taxon>
        <taxon>Pterygota</taxon>
        <taxon>Neoptera</taxon>
        <taxon>Endopterygota</taxon>
        <taxon>Diptera</taxon>
        <taxon>Brachycera</taxon>
        <taxon>Muscomorpha</taxon>
        <taxon>Ephydroidea</taxon>
        <taxon>Drosophilidae</taxon>
        <taxon>Drosophila</taxon>
        <taxon>Sophophora</taxon>
    </lineage>
</organism>
<dbReference type="EC" id="2.4.1.224" evidence="11"/>
<dbReference type="EC" id="2.4.1.225" evidence="11"/>
<dbReference type="EMBL" id="AF083889">
    <property type="protein sequence ID" value="AAC32397.1"/>
    <property type="status" value="ALT_FRAME"/>
    <property type="molecule type" value="mRNA"/>
</dbReference>
<dbReference type="EMBL" id="AB221351">
    <property type="protein sequence ID" value="BAE78509.1"/>
    <property type="molecule type" value="mRNA"/>
</dbReference>
<dbReference type="EMBL" id="AE013599">
    <property type="protein sequence ID" value="AAF58236.1"/>
    <property type="molecule type" value="Genomic_DNA"/>
</dbReference>
<dbReference type="EMBL" id="BT021403">
    <property type="protein sequence ID" value="AAX33551.1"/>
    <property type="molecule type" value="mRNA"/>
</dbReference>
<dbReference type="RefSeq" id="NP_001260971.1">
    <property type="nucleotide sequence ID" value="NM_001274042.1"/>
</dbReference>
<dbReference type="RefSeq" id="NP_477231.1">
    <property type="nucleotide sequence ID" value="NM_057883.3"/>
</dbReference>
<dbReference type="SMR" id="Q9V730"/>
<dbReference type="BioGRID" id="62362">
    <property type="interactions" value="10"/>
</dbReference>
<dbReference type="FunCoup" id="Q9V730">
    <property type="interactions" value="831"/>
</dbReference>
<dbReference type="IntAct" id="Q9V730">
    <property type="interactions" value="5"/>
</dbReference>
<dbReference type="STRING" id="7227.FBpp0423167"/>
<dbReference type="CAZy" id="GT47">
    <property type="family name" value="Glycosyltransferase Family 47"/>
</dbReference>
<dbReference type="CAZy" id="GT64">
    <property type="family name" value="Glycosyltransferase Family 64"/>
</dbReference>
<dbReference type="GlyCosmos" id="Q9V730">
    <property type="glycosylation" value="3 sites, No reported glycans"/>
</dbReference>
<dbReference type="GlyGen" id="Q9V730">
    <property type="glycosylation" value="4 sites"/>
</dbReference>
<dbReference type="PaxDb" id="7227-FBpp0305367"/>
<dbReference type="EnsemblMetazoa" id="FBtr0087495">
    <property type="protein sequence ID" value="FBpp0086624"/>
    <property type="gene ID" value="FBgn0265974"/>
</dbReference>
<dbReference type="EnsemblMetazoa" id="FBtr0333164">
    <property type="protein sequence ID" value="FBpp0305367"/>
    <property type="gene ID" value="FBgn0265974"/>
</dbReference>
<dbReference type="GeneID" id="36614"/>
<dbReference type="KEGG" id="dme:Dmel_CG10117"/>
<dbReference type="AGR" id="FB:FBgn0265974"/>
<dbReference type="CTD" id="36614"/>
<dbReference type="FlyBase" id="FBgn0265974">
    <property type="gene designation" value="ttv"/>
</dbReference>
<dbReference type="VEuPathDB" id="VectorBase:FBgn0265974"/>
<dbReference type="eggNOG" id="KOG1021">
    <property type="taxonomic scope" value="Eukaryota"/>
</dbReference>
<dbReference type="GeneTree" id="ENSGT00940000163960"/>
<dbReference type="HOGENOM" id="CLU_013906_4_1_1"/>
<dbReference type="InParanoid" id="Q9V730"/>
<dbReference type="OMA" id="RRQAWST"/>
<dbReference type="OrthoDB" id="1924787at2759"/>
<dbReference type="PhylomeDB" id="Q9V730"/>
<dbReference type="BRENDA" id="2.4.1.224">
    <property type="organism ID" value="1994"/>
</dbReference>
<dbReference type="BRENDA" id="2.4.1.225">
    <property type="organism ID" value="1994"/>
</dbReference>
<dbReference type="Reactome" id="R-DME-2022928">
    <property type="pathway name" value="HS-GAG biosynthesis"/>
</dbReference>
<dbReference type="SignaLink" id="Q9V730"/>
<dbReference type="UniPathway" id="UPA00378"/>
<dbReference type="UniPathway" id="UPA00756"/>
<dbReference type="UniPathway" id="UPA00862"/>
<dbReference type="BioGRID-ORCS" id="36614">
    <property type="hits" value="1 hit in 3 CRISPR screens"/>
</dbReference>
<dbReference type="GenomeRNAi" id="36614"/>
<dbReference type="PRO" id="PR:Q9V730"/>
<dbReference type="Proteomes" id="UP000000803">
    <property type="component" value="Chromosome 2R"/>
</dbReference>
<dbReference type="Bgee" id="FBgn0265974">
    <property type="expression patterns" value="Expressed in dorsal appendage forming follicle cell in ovary and 276 other cell types or tissues"/>
</dbReference>
<dbReference type="ExpressionAtlas" id="Q9V730">
    <property type="expression patterns" value="baseline and differential"/>
</dbReference>
<dbReference type="GO" id="GO:0005783">
    <property type="term" value="C:endoplasmic reticulum"/>
    <property type="evidence" value="ECO:0000314"/>
    <property type="project" value="UniProtKB"/>
</dbReference>
<dbReference type="GO" id="GO:0005789">
    <property type="term" value="C:endoplasmic reticulum membrane"/>
    <property type="evidence" value="ECO:0007669"/>
    <property type="project" value="UniProtKB-SubCell"/>
</dbReference>
<dbReference type="GO" id="GO:0120504">
    <property type="term" value="C:EXT1-EXT2 complex"/>
    <property type="evidence" value="ECO:0000314"/>
    <property type="project" value="FlyBase"/>
</dbReference>
<dbReference type="GO" id="GO:0005794">
    <property type="term" value="C:Golgi apparatus"/>
    <property type="evidence" value="ECO:0000314"/>
    <property type="project" value="UniProtKB"/>
</dbReference>
<dbReference type="GO" id="GO:0000139">
    <property type="term" value="C:Golgi membrane"/>
    <property type="evidence" value="ECO:0007669"/>
    <property type="project" value="UniProtKB-SubCell"/>
</dbReference>
<dbReference type="GO" id="GO:0016020">
    <property type="term" value="C:membrane"/>
    <property type="evidence" value="ECO:0000303"/>
    <property type="project" value="UniProtKB"/>
</dbReference>
<dbReference type="GO" id="GO:0008375">
    <property type="term" value="F:acetylglucosaminyltransferase activity"/>
    <property type="evidence" value="ECO:0000318"/>
    <property type="project" value="GO_Central"/>
</dbReference>
<dbReference type="GO" id="GO:0050508">
    <property type="term" value="F:glucuronosyl-N-acetylglucosaminyl-proteoglycan 4-alpha-N-acetylglucosaminyltransferase activity"/>
    <property type="evidence" value="ECO:0000314"/>
    <property type="project" value="FlyBase"/>
</dbReference>
<dbReference type="GO" id="GO:0015020">
    <property type="term" value="F:glucuronosyltransferase activity"/>
    <property type="evidence" value="ECO:0000318"/>
    <property type="project" value="GO_Central"/>
</dbReference>
<dbReference type="GO" id="GO:0046872">
    <property type="term" value="F:metal ion binding"/>
    <property type="evidence" value="ECO:0007669"/>
    <property type="project" value="UniProtKB-KW"/>
</dbReference>
<dbReference type="GO" id="GO:0050509">
    <property type="term" value="F:N-acetylglucosaminyl-proteoglycan 4-beta-glucuronosyltransferase activity"/>
    <property type="evidence" value="ECO:0000314"/>
    <property type="project" value="FlyBase"/>
</dbReference>
<dbReference type="GO" id="GO:0008354">
    <property type="term" value="P:germ cell migration"/>
    <property type="evidence" value="ECO:0000315"/>
    <property type="project" value="FlyBase"/>
</dbReference>
<dbReference type="GO" id="GO:0006024">
    <property type="term" value="P:glycosaminoglycan biosynthetic process"/>
    <property type="evidence" value="ECO:0000315"/>
    <property type="project" value="UniProtKB"/>
</dbReference>
<dbReference type="GO" id="GO:0015012">
    <property type="term" value="P:heparan sulfate proteoglycan biosynthetic process"/>
    <property type="evidence" value="ECO:0000314"/>
    <property type="project" value="FlyBase"/>
</dbReference>
<dbReference type="GO" id="GO:0030210">
    <property type="term" value="P:heparin proteoglycan biosynthetic process"/>
    <property type="evidence" value="ECO:0007669"/>
    <property type="project" value="UniProtKB-UniPathway"/>
</dbReference>
<dbReference type="GO" id="GO:0006486">
    <property type="term" value="P:protein glycosylation"/>
    <property type="evidence" value="ECO:0007669"/>
    <property type="project" value="UniProtKB-UniPathway"/>
</dbReference>
<dbReference type="GO" id="GO:0016055">
    <property type="term" value="P:Wnt signaling pathway"/>
    <property type="evidence" value="ECO:0007669"/>
    <property type="project" value="UniProtKB-KW"/>
</dbReference>
<dbReference type="FunFam" id="3.90.550.10:FF:000146">
    <property type="entry name" value="Tout-velu, isoform B"/>
    <property type="match status" value="1"/>
</dbReference>
<dbReference type="Gene3D" id="3.90.550.10">
    <property type="entry name" value="Spore Coat Polysaccharide Biosynthesis Protein SpsA, Chain A"/>
    <property type="match status" value="1"/>
</dbReference>
<dbReference type="InterPro" id="IPR004263">
    <property type="entry name" value="Exostosin"/>
</dbReference>
<dbReference type="InterPro" id="IPR040911">
    <property type="entry name" value="Exostosin_GT47"/>
</dbReference>
<dbReference type="InterPro" id="IPR015338">
    <property type="entry name" value="GT64_dom"/>
</dbReference>
<dbReference type="InterPro" id="IPR029044">
    <property type="entry name" value="Nucleotide-diphossugar_trans"/>
</dbReference>
<dbReference type="PANTHER" id="PTHR48261">
    <property type="entry name" value="ACETYLGLUCOSAMINYLTRANSFERASE"/>
    <property type="match status" value="1"/>
</dbReference>
<dbReference type="PANTHER" id="PTHR48261:SF3">
    <property type="entry name" value="EXOSTOSIN GLYCOSYLTRANSFERASE 1"/>
    <property type="match status" value="1"/>
</dbReference>
<dbReference type="Pfam" id="PF03016">
    <property type="entry name" value="Exostosin_GT47"/>
    <property type="match status" value="1"/>
</dbReference>
<dbReference type="Pfam" id="PF09258">
    <property type="entry name" value="Glyco_transf_64"/>
    <property type="match status" value="1"/>
</dbReference>
<dbReference type="SUPFAM" id="SSF53448">
    <property type="entry name" value="Nucleotide-diphospho-sugar transferases"/>
    <property type="match status" value="1"/>
</dbReference>
<reference key="1">
    <citation type="journal article" date="1998" name="Nature">
        <title>Tout-velu is a Drosophila homologue of the putative tumour suppressor EXT-1 and is needed for Hh diffusion.</title>
        <authorList>
            <person name="Bellaiche Y."/>
            <person name="The I."/>
            <person name="Perrimon N."/>
        </authorList>
    </citation>
    <scope>NUCLEOTIDE SEQUENCE [MRNA]</scope>
    <scope>FUNCTION</scope>
    <scope>MEMBRANE TOPOLOGY</scope>
    <scope>DEVELOPMENTAL STAGE</scope>
</reference>
<reference key="2">
    <citation type="journal article" date="2006" name="J. Biol. Chem.">
        <title>Heparan sulfate polymerization in Drosophila.</title>
        <authorList>
            <person name="Izumikawa T."/>
            <person name="Egusa N."/>
            <person name="Taniguchi F."/>
            <person name="Sugahara K."/>
            <person name="Kitagawa H."/>
        </authorList>
    </citation>
    <scope>NUCLEOTIDE SEQUENCE [MRNA]</scope>
    <scope>FUNCTION</scope>
    <scope>CATALYTIC ACTIVITY</scope>
</reference>
<reference key="3">
    <citation type="journal article" date="2000" name="Science">
        <title>The genome sequence of Drosophila melanogaster.</title>
        <authorList>
            <person name="Adams M.D."/>
            <person name="Celniker S.E."/>
            <person name="Holt R.A."/>
            <person name="Evans C.A."/>
            <person name="Gocayne J.D."/>
            <person name="Amanatides P.G."/>
            <person name="Scherer S.E."/>
            <person name="Li P.W."/>
            <person name="Hoskins R.A."/>
            <person name="Galle R.F."/>
            <person name="George R.A."/>
            <person name="Lewis S.E."/>
            <person name="Richards S."/>
            <person name="Ashburner M."/>
            <person name="Henderson S.N."/>
            <person name="Sutton G.G."/>
            <person name="Wortman J.R."/>
            <person name="Yandell M.D."/>
            <person name="Zhang Q."/>
            <person name="Chen L.X."/>
            <person name="Brandon R.C."/>
            <person name="Rogers Y.-H.C."/>
            <person name="Blazej R.G."/>
            <person name="Champe M."/>
            <person name="Pfeiffer B.D."/>
            <person name="Wan K.H."/>
            <person name="Doyle C."/>
            <person name="Baxter E.G."/>
            <person name="Helt G."/>
            <person name="Nelson C.R."/>
            <person name="Miklos G.L.G."/>
            <person name="Abril J.F."/>
            <person name="Agbayani A."/>
            <person name="An H.-J."/>
            <person name="Andrews-Pfannkoch C."/>
            <person name="Baldwin D."/>
            <person name="Ballew R.M."/>
            <person name="Basu A."/>
            <person name="Baxendale J."/>
            <person name="Bayraktaroglu L."/>
            <person name="Beasley E.M."/>
            <person name="Beeson K.Y."/>
            <person name="Benos P.V."/>
            <person name="Berman B.P."/>
            <person name="Bhandari D."/>
            <person name="Bolshakov S."/>
            <person name="Borkova D."/>
            <person name="Botchan M.R."/>
            <person name="Bouck J."/>
            <person name="Brokstein P."/>
            <person name="Brottier P."/>
            <person name="Burtis K.C."/>
            <person name="Busam D.A."/>
            <person name="Butler H."/>
            <person name="Cadieu E."/>
            <person name="Center A."/>
            <person name="Chandra I."/>
            <person name="Cherry J.M."/>
            <person name="Cawley S."/>
            <person name="Dahlke C."/>
            <person name="Davenport L.B."/>
            <person name="Davies P."/>
            <person name="de Pablos B."/>
            <person name="Delcher A."/>
            <person name="Deng Z."/>
            <person name="Mays A.D."/>
            <person name="Dew I."/>
            <person name="Dietz S.M."/>
            <person name="Dodson K."/>
            <person name="Doup L.E."/>
            <person name="Downes M."/>
            <person name="Dugan-Rocha S."/>
            <person name="Dunkov B.C."/>
            <person name="Dunn P."/>
            <person name="Durbin K.J."/>
            <person name="Evangelista C.C."/>
            <person name="Ferraz C."/>
            <person name="Ferriera S."/>
            <person name="Fleischmann W."/>
            <person name="Fosler C."/>
            <person name="Gabrielian A.E."/>
            <person name="Garg N.S."/>
            <person name="Gelbart W.M."/>
            <person name="Glasser K."/>
            <person name="Glodek A."/>
            <person name="Gong F."/>
            <person name="Gorrell J.H."/>
            <person name="Gu Z."/>
            <person name="Guan P."/>
            <person name="Harris M."/>
            <person name="Harris N.L."/>
            <person name="Harvey D.A."/>
            <person name="Heiman T.J."/>
            <person name="Hernandez J.R."/>
            <person name="Houck J."/>
            <person name="Hostin D."/>
            <person name="Houston K.A."/>
            <person name="Howland T.J."/>
            <person name="Wei M.-H."/>
            <person name="Ibegwam C."/>
            <person name="Jalali M."/>
            <person name="Kalush F."/>
            <person name="Karpen G.H."/>
            <person name="Ke Z."/>
            <person name="Kennison J.A."/>
            <person name="Ketchum K.A."/>
            <person name="Kimmel B.E."/>
            <person name="Kodira C.D."/>
            <person name="Kraft C.L."/>
            <person name="Kravitz S."/>
            <person name="Kulp D."/>
            <person name="Lai Z."/>
            <person name="Lasko P."/>
            <person name="Lei Y."/>
            <person name="Levitsky A.A."/>
            <person name="Li J.H."/>
            <person name="Li Z."/>
            <person name="Liang Y."/>
            <person name="Lin X."/>
            <person name="Liu X."/>
            <person name="Mattei B."/>
            <person name="McIntosh T.C."/>
            <person name="McLeod M.P."/>
            <person name="McPherson D."/>
            <person name="Merkulov G."/>
            <person name="Milshina N.V."/>
            <person name="Mobarry C."/>
            <person name="Morris J."/>
            <person name="Moshrefi A."/>
            <person name="Mount S.M."/>
            <person name="Moy M."/>
            <person name="Murphy B."/>
            <person name="Murphy L."/>
            <person name="Muzny D.M."/>
            <person name="Nelson D.L."/>
            <person name="Nelson D.R."/>
            <person name="Nelson K.A."/>
            <person name="Nixon K."/>
            <person name="Nusskern D.R."/>
            <person name="Pacleb J.M."/>
            <person name="Palazzolo M."/>
            <person name="Pittman G.S."/>
            <person name="Pan S."/>
            <person name="Pollard J."/>
            <person name="Puri V."/>
            <person name="Reese M.G."/>
            <person name="Reinert K."/>
            <person name="Remington K."/>
            <person name="Saunders R.D.C."/>
            <person name="Scheeler F."/>
            <person name="Shen H."/>
            <person name="Shue B.C."/>
            <person name="Siden-Kiamos I."/>
            <person name="Simpson M."/>
            <person name="Skupski M.P."/>
            <person name="Smith T.J."/>
            <person name="Spier E."/>
            <person name="Spradling A.C."/>
            <person name="Stapleton M."/>
            <person name="Strong R."/>
            <person name="Sun E."/>
            <person name="Svirskas R."/>
            <person name="Tector C."/>
            <person name="Turner R."/>
            <person name="Venter E."/>
            <person name="Wang A.H."/>
            <person name="Wang X."/>
            <person name="Wang Z.-Y."/>
            <person name="Wassarman D.A."/>
            <person name="Weinstock G.M."/>
            <person name="Weissenbach J."/>
            <person name="Williams S.M."/>
            <person name="Woodage T."/>
            <person name="Worley K.C."/>
            <person name="Wu D."/>
            <person name="Yang S."/>
            <person name="Yao Q.A."/>
            <person name="Ye J."/>
            <person name="Yeh R.-F."/>
            <person name="Zaveri J.S."/>
            <person name="Zhan M."/>
            <person name="Zhang G."/>
            <person name="Zhao Q."/>
            <person name="Zheng L."/>
            <person name="Zheng X.H."/>
            <person name="Zhong F.N."/>
            <person name="Zhong W."/>
            <person name="Zhou X."/>
            <person name="Zhu S.C."/>
            <person name="Zhu X."/>
            <person name="Smith H.O."/>
            <person name="Gibbs R.A."/>
            <person name="Myers E.W."/>
            <person name="Rubin G.M."/>
            <person name="Venter J.C."/>
        </authorList>
    </citation>
    <scope>NUCLEOTIDE SEQUENCE [LARGE SCALE GENOMIC DNA]</scope>
    <source>
        <strain>Berkeley</strain>
    </source>
</reference>
<reference key="4">
    <citation type="journal article" date="2002" name="Genome Biol.">
        <title>Annotation of the Drosophila melanogaster euchromatic genome: a systematic review.</title>
        <authorList>
            <person name="Misra S."/>
            <person name="Crosby M.A."/>
            <person name="Mungall C.J."/>
            <person name="Matthews B.B."/>
            <person name="Campbell K.S."/>
            <person name="Hradecky P."/>
            <person name="Huang Y."/>
            <person name="Kaminker J.S."/>
            <person name="Millburn G.H."/>
            <person name="Prochnik S.E."/>
            <person name="Smith C.D."/>
            <person name="Tupy J.L."/>
            <person name="Whitfield E.J."/>
            <person name="Bayraktaroglu L."/>
            <person name="Berman B.P."/>
            <person name="Bettencourt B.R."/>
            <person name="Celniker S.E."/>
            <person name="de Grey A.D.N.J."/>
            <person name="Drysdale R.A."/>
            <person name="Harris N.L."/>
            <person name="Richter J."/>
            <person name="Russo S."/>
            <person name="Schroeder A.J."/>
            <person name="Shu S.Q."/>
            <person name="Stapleton M."/>
            <person name="Yamada C."/>
            <person name="Ashburner M."/>
            <person name="Gelbart W.M."/>
            <person name="Rubin G.M."/>
            <person name="Lewis S.E."/>
        </authorList>
    </citation>
    <scope>GENOME REANNOTATION</scope>
    <source>
        <strain>Berkeley</strain>
    </source>
</reference>
<reference key="5">
    <citation type="submission" date="2005-03" db="EMBL/GenBank/DDBJ databases">
        <authorList>
            <person name="Stapleton M."/>
            <person name="Carlson J.W."/>
            <person name="Chavez C."/>
            <person name="Frise E."/>
            <person name="George R.A."/>
            <person name="Pacleb J.M."/>
            <person name="Park S."/>
            <person name="Wan K.H."/>
            <person name="Yu C."/>
            <person name="Rubin G.M."/>
            <person name="Celniker S.E."/>
        </authorList>
    </citation>
    <scope>NUCLEOTIDE SEQUENCE [LARGE SCALE MRNA]</scope>
    <source>
        <strain>Berkeley</strain>
        <tissue>Embryo</tissue>
    </source>
</reference>
<reference key="6">
    <citation type="journal article" date="1999" name="Mol. Cell">
        <title>Hedgehog movement is regulated through tout velu-dependent synthesis of a heparan sulfate proteoglycan.</title>
        <authorList>
            <person name="The I."/>
            <person name="Bellaiche Y."/>
            <person name="Perrimon N."/>
        </authorList>
    </citation>
    <scope>FUNCTION IN HH PATHWAY</scope>
    <scope>ENZYME ACTIVITY</scope>
    <scope>SUBCELLULAR LOCATION</scope>
    <scope>TISSUE SPECIFICITY</scope>
    <scope>DISRUPTION PHENOTYPE</scope>
</reference>
<reference key="7">
    <citation type="journal article" date="2000" name="J. Biol. Chem.">
        <title>Structural analysis of glycosaminoglycans in Drosophila and Caenorhabditis elegans and demonstration that tout-velu, a Drosophila gene related to EXT tumor suppressors, affects heparan sulfate in vivo.</title>
        <authorList>
            <person name="Toyoda H."/>
            <person name="Kinoshita-Toyoda A."/>
            <person name="Selleck S.B."/>
        </authorList>
    </citation>
    <scope>ENZYME ACTIVITY</scope>
</reference>
<reference key="8">
    <citation type="journal article" date="2000" name="J. Biol. Chem.">
        <title>Structural analysis of glycosaminoglycans in animals bearing mutations in sugarless, sulfateless, and tout-velu. Drosophila homologues of vertebrate genes encoding glycosaminoglycan biosynthetic enzymes.</title>
        <authorList>
            <person name="Toyoda H."/>
            <person name="Kinoshita-Toyoda A."/>
            <person name="Fox B."/>
            <person name="Selleck S.B."/>
        </authorList>
    </citation>
    <scope>FUNCTION IN HH PATHWAY</scope>
</reference>
<reference key="9">
    <citation type="journal article" date="2003" name="Dev. Cell">
        <title>Cholesterol modification of hedgehog is required for trafficking and movement, revealing an asymmetric cellular response to hedgehog.</title>
        <authorList>
            <person name="Gallet A."/>
            <person name="Rodriguez R."/>
            <person name="Ruel L."/>
            <person name="Therond P.P."/>
        </authorList>
    </citation>
    <scope>FUNCTION IN HH PATHWAY</scope>
</reference>
<reference key="10">
    <citation type="journal article" date="2004" name="Development">
        <title>Three Drosophila EXT genes shape morphogen gradients through synthesis of heparan sulfate proteoglycans.</title>
        <authorList>
            <person name="Takei Y."/>
            <person name="Ozawa Y."/>
            <person name="Sato M."/>
            <person name="Watanabe A."/>
            <person name="Tabata T."/>
        </authorList>
    </citation>
    <scope>FUNCTION</scope>
    <scope>TISSUE SPECIFICITY</scope>
    <scope>DISRUPTION PHENOTYPE</scope>
    <scope>MUTAGENESIS OF GLY-447</scope>
</reference>
<reference key="11">
    <citation type="journal article" date="2004" name="Development">
        <title>Drosophila glypicans control the cell-to-cell movement of Hedgehog by a dynamin-independent process.</title>
        <authorList>
            <person name="Han C."/>
            <person name="Belenkaya T.Y."/>
            <person name="Wang B."/>
            <person name="Lin X."/>
        </authorList>
    </citation>
    <scope>FUNCTION IN HH PATHWAY</scope>
    <scope>DISRUPTION PHENOTYPE</scope>
</reference>
<reference key="12">
    <citation type="journal article" date="2004" name="Development">
        <title>Distinct and collaborative roles of Drosophila EXT family proteins in morphogen signalling and gradient formation.</title>
        <authorList>
            <person name="Han C."/>
            <person name="Belenkaya T.Y."/>
            <person name="Khodoun M."/>
            <person name="Tauchi M."/>
            <person name="Lin X."/>
            <person name="Lin X."/>
        </authorList>
    </citation>
    <scope>FUNCTION</scope>
</reference>
<reference key="13">
    <citation type="journal article" date="2004" name="Development">
        <title>Abrogation of heparan sulfate synthesis in Drosophila disrupts the Wingless, Hedgehog and Decapentaplegic signaling pathways.</title>
        <authorList>
            <person name="Bornemann D.J."/>
            <person name="Duncan J.E."/>
            <person name="Staatz W."/>
            <person name="Selleck S."/>
            <person name="Warrior R."/>
        </authorList>
    </citation>
    <scope>FUNCTION</scope>
    <scope>DISRUPTION PHENOTYPE</scope>
</reference>
<reference key="14">
    <citation type="journal article" date="2013" name="Development">
        <title>The Drosophila GOLPH3 homolog regulates the biosynthesis of heparan sulfate proteoglycans by modulating the retrograde trafficking of exostosins.</title>
        <authorList>
            <person name="Chang W.L."/>
            <person name="Chang C.W."/>
            <person name="Chang Y.Y."/>
            <person name="Sung H.H."/>
            <person name="Lin M.D."/>
            <person name="Chang S.C."/>
            <person name="Chen C.H."/>
            <person name="Huang C.W."/>
            <person name="Tung K.S."/>
            <person name="Chou T.B."/>
        </authorList>
    </citation>
    <scope>INTERACTION WITH SAU</scope>
    <scope>SUBCELLULAR LOCATION</scope>
</reference>
<feature type="chain" id="PRO_0000149664" description="Exostosin-1">
    <location>
        <begin position="1"/>
        <end position="760"/>
    </location>
</feature>
<feature type="topological domain" description="Cytoplasmic" evidence="2">
    <location>
        <begin position="1"/>
        <end position="6"/>
    </location>
</feature>
<feature type="transmembrane region" description="Helical; Signal-anchor for type II membrane protein" evidence="2">
    <location>
        <begin position="7"/>
        <end position="25"/>
    </location>
</feature>
<feature type="topological domain" description="Lumenal" evidence="2">
    <location>
        <begin position="26"/>
        <end position="760"/>
    </location>
</feature>
<feature type="region of interest" description="Disordered" evidence="3">
    <location>
        <begin position="540"/>
        <end position="560"/>
    </location>
</feature>
<feature type="compositionally biased region" description="Polar residues" evidence="3">
    <location>
        <begin position="541"/>
        <end position="560"/>
    </location>
</feature>
<feature type="active site" evidence="1">
    <location>
        <position position="670"/>
    </location>
</feature>
<feature type="binding site" evidence="1">
    <location>
        <position position="437"/>
    </location>
    <ligand>
        <name>UDP-N-acetyl-alpha-D-glucosamine</name>
        <dbReference type="ChEBI" id="CHEBI:57705"/>
    </ligand>
</feature>
<feature type="binding site" evidence="1">
    <location>
        <position position="565"/>
    </location>
    <ligand>
        <name>UDP-N-acetyl-alpha-D-glucosamine</name>
        <dbReference type="ChEBI" id="CHEBI:57705"/>
    </ligand>
</feature>
<feature type="binding site" evidence="1">
    <location>
        <position position="581"/>
    </location>
    <ligand>
        <name>UDP-N-acetyl-alpha-D-glucosamine</name>
        <dbReference type="ChEBI" id="CHEBI:57705"/>
    </ligand>
</feature>
<feature type="binding site" evidence="1">
    <location>
        <position position="582"/>
    </location>
    <ligand>
        <name>UDP-N-acetyl-alpha-D-glucosamine</name>
        <dbReference type="ChEBI" id="CHEBI:57705"/>
    </ligand>
</feature>
<feature type="binding site" evidence="1">
    <location>
        <position position="583"/>
    </location>
    <ligand>
        <name>Mn(2+)</name>
        <dbReference type="ChEBI" id="CHEBI:29035"/>
        <note>catalytic</note>
    </ligand>
</feature>
<feature type="binding site" evidence="1">
    <location>
        <position position="583"/>
    </location>
    <ligand>
        <name>UDP-N-acetyl-alpha-D-glucosamine</name>
        <dbReference type="ChEBI" id="CHEBI:57705"/>
    </ligand>
</feature>
<feature type="binding site" evidence="1">
    <location>
        <position position="669"/>
    </location>
    <ligand>
        <name>UDP-N-acetyl-alpha-D-glucosamine</name>
        <dbReference type="ChEBI" id="CHEBI:57705"/>
    </ligand>
</feature>
<feature type="binding site" evidence="1">
    <location>
        <position position="670"/>
    </location>
    <ligand>
        <name>UDP-N-acetyl-alpha-D-glucosamine</name>
        <dbReference type="ChEBI" id="CHEBI:57705"/>
    </ligand>
</feature>
<feature type="binding site" evidence="1">
    <location>
        <position position="713"/>
    </location>
    <ligand>
        <name>UDP-N-acetyl-alpha-D-glucosamine</name>
        <dbReference type="ChEBI" id="CHEBI:57705"/>
    </ligand>
</feature>
<feature type="glycosylation site" description="N-linked (GlcNAc...) asparagine" evidence="2">
    <location>
        <position position="71"/>
    </location>
</feature>
<feature type="glycosylation site" description="N-linked (GlcNAc...) asparagine" evidence="2">
    <location>
        <position position="327"/>
    </location>
</feature>
<feature type="glycosylation site" description="N-linked (GlcNAc...) asparagine" evidence="2">
    <location>
        <position position="476"/>
    </location>
</feature>
<feature type="disulfide bond" evidence="1">
    <location>
        <begin position="668"/>
        <end position="716"/>
    </location>
</feature>
<feature type="mutagenesis site" description="In ttv205; induces defects in wing patterning due to impaired movement of morphogens." evidence="7">
    <original>G</original>
    <variation>D</variation>
    <location>
        <position position="447"/>
    </location>
</feature>
<evidence type="ECO:0000250" key="1">
    <source>
        <dbReference type="UniProtKB" id="Q9ES89"/>
    </source>
</evidence>
<evidence type="ECO:0000255" key="2"/>
<evidence type="ECO:0000256" key="3">
    <source>
        <dbReference type="SAM" id="MobiDB-lite"/>
    </source>
</evidence>
<evidence type="ECO:0000269" key="4">
    <source>
    </source>
</evidence>
<evidence type="ECO:0000269" key="5">
    <source>
    </source>
</evidence>
<evidence type="ECO:0000269" key="6">
    <source>
    </source>
</evidence>
<evidence type="ECO:0000269" key="7">
    <source>
    </source>
</evidence>
<evidence type="ECO:0000269" key="8">
    <source>
    </source>
</evidence>
<evidence type="ECO:0000269" key="9">
    <source>
    </source>
</evidence>
<evidence type="ECO:0000269" key="10">
    <source>
    </source>
</evidence>
<evidence type="ECO:0000269" key="11">
    <source>
    </source>
</evidence>
<evidence type="ECO:0000269" key="12">
    <source>
    </source>
</evidence>
<evidence type="ECO:0000303" key="13">
    <source>
    </source>
</evidence>
<evidence type="ECO:0000305" key="14"/>
<protein>
    <recommendedName>
        <fullName>Exostosin-1</fullName>
        <ecNumber evidence="11">2.4.1.224</ecNumber>
        <ecNumber evidence="11">2.4.1.225</ecNumber>
    </recommendedName>
    <alternativeName>
        <fullName>Protein tout-velu</fullName>
        <shortName evidence="13">TTV</shortName>
    </alternativeName>
</protein>
<proteinExistence type="evidence at protein level"/>
<sequence>MQAKKRYILVFVSCAFLAYAYFGGYRLKVSPLRPRRAQHESAKDGGVQPHEQLPSFLGAHDMQELQLLQSNQSKSLDSSKHLVTRKPDCRMETCFDFTRCYDRFLVYIYPPEPLNSLGAAPPTSANYQKILTAIQESRYYTSDPTAACLFVLGIDTLDRDSLSEDYVRNVPSRLARLPYWNNGRNHIIFNLYSGTWPDYAENSLGFDAGEAILAKASMGVLQLRHGFDVSIPLFHKQFPLRAGATGTVQSNNFPANKKYLLAFKGKRYVHGIGSETRNSLFHLHNGRDMVLVTTCRHGKSWRELQDNRCDEDNREYDRYDYETLLQNSTFCLVPRGRRLGSFRFLEALQAGCIPVLLSNAWVLPFESKIDWKQAAIWADERLLLQVPDIVRSIPAERIFALRQQTQVLWERYFGSIEKIVFTTFEIIRERLPDYPVRSSLVWNSSPGALLTLPTFADSSRYMPFLLNSMGAEPRHNYTAVIYVQIGAALGPNAALYKLVRTITKSQFVERILVLWAADRPLPLKKRWPPTSHIPLHVISLGGSTRSQGAGPTSQTTEGRPSISQRFLPYDEIQTDAVLSLDEDAILNTDELDFAYTVWRDFPERIVGYPARAHFWDDSKNAWGYTSKWTNYYSIVLTGAAFYHRYYNYLYTNWLSLLLLKTVQQSSNCEDILMNLLVSHVTRKPPIKVTQRKGYKDRETGRSPWNDPDHFIQRQSCLNTFAAVFGYMPLIRSNLRMDPMLYRDPVSNLRKKYRQIELVGS</sequence>
<name>EXT1_DROME</name>
<keyword id="KW-0217">Developmental protein</keyword>
<keyword id="KW-1015">Disulfide bond</keyword>
<keyword id="KW-0256">Endoplasmic reticulum</keyword>
<keyword id="KW-0325">Glycoprotein</keyword>
<keyword id="KW-0328">Glycosyltransferase</keyword>
<keyword id="KW-0333">Golgi apparatus</keyword>
<keyword id="KW-0464">Manganese</keyword>
<keyword id="KW-0472">Membrane</keyword>
<keyword id="KW-0479">Metal-binding</keyword>
<keyword id="KW-1185">Reference proteome</keyword>
<keyword id="KW-0735">Signal-anchor</keyword>
<keyword id="KW-0808">Transferase</keyword>
<keyword id="KW-0812">Transmembrane</keyword>
<keyword id="KW-1133">Transmembrane helix</keyword>
<keyword id="KW-0879">Wnt signaling pathway</keyword>
<comment type="function">
    <text evidence="4 5 6 7 8 9 10 11 12">Glycosyltransferase required for the biosynthesis of heparan-sulfate and responsible for the alternating addition of beta-1-4-linked glucuronic acid (GlcA) and alpha-1-4-linked N-acetylglucosamine (GlcNAc) units to nascent heparan sulfate chains. Botv is the trigger of heparan sulfate chain initiation and polymerization takes place by a complex of ttv and sotv. Plays a central role in the diffusion of morphogens hedgehog (hh), wingless (wg) and decapentaplegic (dpp) via its role in heparan sulfate proteoglycans (HSPGs) biosynthesis which are required for movement of hh, dpp and wg morphogens.</text>
</comment>
<comment type="catalytic activity">
    <reaction evidence="11">
        <text>3-O-{[(1-&gt;4)-beta-D-GlcA-(1-&gt;4)-alpha-D-GlcNAc](n)-(1-&gt;4)-beta-D-GlcA-(1-&gt;3)-beta-D-Gal-(1-&gt;3)-beta-D-Gal-(1-&gt;4)-beta-D-Xyl}-L-seryl-[protein] + UDP-N-acetyl-alpha-D-glucosamine = 3-O-{alpha-D-GlcNAc-[(1-&gt;4)-beta-D-GlcA-(1-&gt;4)-alpha-D-GlcNAc](n)-(1-&gt;4)-beta-D-GlcA-(1-&gt;3)-beta-D-Gal-(1-&gt;3)-beta-D-Gal-(1-&gt;4)-beta-D-Xyl}-L-seryl-[protein] + UDP + H(+)</text>
        <dbReference type="Rhea" id="RHEA:16213"/>
        <dbReference type="Rhea" id="RHEA-COMP:12621"/>
        <dbReference type="Rhea" id="RHEA-COMP:12623"/>
        <dbReference type="ChEBI" id="CHEBI:15378"/>
        <dbReference type="ChEBI" id="CHEBI:57705"/>
        <dbReference type="ChEBI" id="CHEBI:58223"/>
        <dbReference type="ChEBI" id="CHEBI:132415"/>
        <dbReference type="ChEBI" id="CHEBI:132416"/>
        <dbReference type="EC" id="2.4.1.224"/>
    </reaction>
    <physiologicalReaction direction="left-to-right" evidence="11">
        <dbReference type="Rhea" id="RHEA:16214"/>
    </physiologicalReaction>
</comment>
<comment type="catalytic activity">
    <reaction evidence="11">
        <text>3-O-{alpha-D-GlcNAc-[(1-&gt;4)-beta-D-GlcA-(1-&gt;4)-alpha-D-GlcNAc](n)-(1-&gt;4)-beta-D-GlcA-(1-&gt;3)-beta-D-Gal-(1-&gt;3)-beta-D-Gal-(1-&gt;4)-beta-D-Xyl}-L-seryl-[protein] + UDP-alpha-D-glucuronate = 3-O-{[(1-&gt;4)-beta-D-GlcA-(1-&gt;4)-alpha-D-GlcNAc](n+1)-(1-&gt;4)-beta-D-GlcA-(1-&gt;3)-beta-D-Gal-(1-&gt;3)-beta-D-Gal-(1-&gt;4)-beta-D-Xyl}-L-seryl-[protein] + UDP + H(+)</text>
        <dbReference type="Rhea" id="RHEA:20908"/>
        <dbReference type="Rhea" id="RHEA-COMP:12623"/>
        <dbReference type="Rhea" id="RHEA-COMP:14295"/>
        <dbReference type="ChEBI" id="CHEBI:15378"/>
        <dbReference type="ChEBI" id="CHEBI:58052"/>
        <dbReference type="ChEBI" id="CHEBI:58223"/>
        <dbReference type="ChEBI" id="CHEBI:132415"/>
        <dbReference type="ChEBI" id="CHEBI:132416"/>
        <dbReference type="EC" id="2.4.1.225"/>
    </reaction>
    <physiologicalReaction direction="left-to-right" evidence="11">
        <dbReference type="Rhea" id="RHEA:20909"/>
    </physiologicalReaction>
</comment>
<comment type="cofactor">
    <cofactor evidence="1">
        <name>Mn(2+)</name>
        <dbReference type="ChEBI" id="CHEBI:29035"/>
    </cofactor>
</comment>
<comment type="pathway">
    <text>Protein modification; protein glycosylation.</text>
</comment>
<comment type="pathway">
    <text>Glycan metabolism; heparan sulfate biosynthesis.</text>
</comment>
<comment type="pathway">
    <text>Glycan metabolism; heparin biosynthesis.</text>
</comment>
<comment type="subunit">
    <text>Interacts with sau (PubMed:23720043).</text>
</comment>
<comment type="interaction">
    <interactant intactId="EBI-166374">
        <id>Q9V730</id>
    </interactant>
    <interactant intactId="EBI-142791">
        <id>Q9Y169</id>
        <label>sotv</label>
    </interactant>
    <organismsDiffer>false</organismsDiffer>
    <experiments>3</experiments>
</comment>
<comment type="subcellular location">
    <subcellularLocation>
        <location>Endoplasmic reticulum membrane</location>
        <topology>Single-pass type II membrane protein</topology>
    </subcellularLocation>
    <subcellularLocation>
        <location>Golgi apparatus membrane</location>
        <topology>Single-pass type II membrane protein</topology>
    </subcellularLocation>
    <text>Localization to the Golgi may be regulated by sau (PubMed:23720043).</text>
</comment>
<comment type="tissue specificity">
    <text evidence="4 7">Ubiquitously expressed in early embryos. Later (in stage 10 embryos), it is expressed at higher level in the nervous system. Ubiquitously expressed in wing imaginal disk.</text>
</comment>
<comment type="developmental stage">
    <text evidence="12">Expressed both maternally and zygotically.</text>
</comment>
<comment type="disruption phenotype">
    <text evidence="4 7 8 10">According to some authors (PubMed:10549295) ttv mutants have no effect on wg signaling, while according to others (PubMed:14645127, PubMed:14729575, PubMed:15056609) wg signaling is affected. Such discrepancy may be explained by the fact that the absence of ttv could be partially compensated by the intact sotv protein.</text>
</comment>
<comment type="miscellaneous">
    <text>'Tout velu' means 'very hairy' in French.</text>
</comment>
<comment type="similarity">
    <text evidence="14">Belongs to the glycosyltransferase 47 family.</text>
</comment>
<comment type="sequence caution" evidence="14">
    <conflict type="frameshift">
        <sequence resource="EMBL-CDS" id="AAC32397"/>
    </conflict>
</comment>